<feature type="signal peptide" evidence="1">
    <location>
        <begin position="1"/>
        <end position="22"/>
    </location>
</feature>
<feature type="chain" id="PRO_0000434588" description="Hoefavidin">
    <location>
        <begin position="23"/>
        <end position="164"/>
    </location>
</feature>
<feature type="domain" description="Avidin-like" evidence="2">
    <location>
        <begin position="32"/>
        <end position="155"/>
    </location>
</feature>
<feature type="binding site" evidence="3 11">
    <location>
        <position position="42"/>
    </location>
    <ligand>
        <name>biotin</name>
        <dbReference type="ChEBI" id="CHEBI:57586"/>
    </ligand>
</feature>
<feature type="binding site" evidence="3 11">
    <location>
        <position position="46"/>
    </location>
    <ligand>
        <name>biotin</name>
        <dbReference type="ChEBI" id="CHEBI:57586"/>
    </ligand>
</feature>
<feature type="binding site" evidence="3 11">
    <location>
        <position position="68"/>
    </location>
    <ligand>
        <name>biotin</name>
        <dbReference type="ChEBI" id="CHEBI:57586"/>
    </ligand>
</feature>
<feature type="binding site" evidence="3 11">
    <location>
        <position position="70"/>
    </location>
    <ligand>
        <name>biotin</name>
        <dbReference type="ChEBI" id="CHEBI:57586"/>
    </ligand>
</feature>
<feature type="binding site" evidence="3 11">
    <location>
        <position position="76"/>
    </location>
    <ligand>
        <name>biotin</name>
        <dbReference type="ChEBI" id="CHEBI:57586"/>
    </ligand>
</feature>
<feature type="binding site" evidence="3 11">
    <location>
        <position position="110"/>
    </location>
    <ligand>
        <name>biotin</name>
        <dbReference type="ChEBI" id="CHEBI:57586"/>
    </ligand>
</feature>
<feature type="binding site" evidence="3 11">
    <location>
        <position position="112"/>
    </location>
    <ligand>
        <name>biotin</name>
        <dbReference type="ChEBI" id="CHEBI:57586"/>
    </ligand>
</feature>
<feature type="binding site" evidence="3 11">
    <location>
        <position position="148"/>
    </location>
    <ligand>
        <name>biotin</name>
        <dbReference type="ChEBI" id="CHEBI:57586"/>
    </ligand>
</feature>
<feature type="disulfide bond" evidence="3 5 11 16">
    <location>
        <begin position="77"/>
        <end position="108"/>
    </location>
</feature>
<feature type="mutagenesis site" description="This mutant forms a disulfide bridge stabilizing the octamer and preventing dissociation into dimers upon biotin binding." evidence="5">
    <original>P</original>
    <variation>C</variation>
    <location>
        <position position="83"/>
    </location>
</feature>
<feature type="turn" evidence="17">
    <location>
        <begin position="29"/>
        <end position="34"/>
    </location>
</feature>
<feature type="strand" evidence="17">
    <location>
        <begin position="38"/>
        <end position="42"/>
    </location>
</feature>
<feature type="strand" evidence="17">
    <location>
        <begin position="47"/>
        <end position="54"/>
    </location>
</feature>
<feature type="strand" evidence="17">
    <location>
        <begin position="56"/>
        <end position="58"/>
    </location>
</feature>
<feature type="strand" evidence="17">
    <location>
        <begin position="61"/>
        <end position="69"/>
    </location>
</feature>
<feature type="strand" evidence="17">
    <location>
        <begin position="79"/>
        <end position="83"/>
    </location>
</feature>
<feature type="strand" evidence="17">
    <location>
        <begin position="85"/>
        <end position="89"/>
    </location>
</feature>
<feature type="turn" evidence="17">
    <location>
        <begin position="90"/>
        <end position="93"/>
    </location>
</feature>
<feature type="strand" evidence="17">
    <location>
        <begin position="94"/>
        <end position="102"/>
    </location>
</feature>
<feature type="strand" evidence="17">
    <location>
        <begin position="104"/>
        <end position="119"/>
    </location>
</feature>
<feature type="strand" evidence="17">
    <location>
        <begin position="121"/>
        <end position="124"/>
    </location>
</feature>
<feature type="strand" evidence="17">
    <location>
        <begin position="126"/>
        <end position="137"/>
    </location>
</feature>
<feature type="strand" evidence="17">
    <location>
        <begin position="140"/>
        <end position="153"/>
    </location>
</feature>
<feature type="strand" evidence="18">
    <location>
        <begin position="159"/>
        <end position="162"/>
    </location>
</feature>
<gene>
    <name evidence="9" type="ORF">HPDFL43_17171</name>
</gene>
<reference key="1">
    <citation type="journal article" date="2013" name="Stand. Genomic Sci.">
        <title>Genome of the marine alphaproteobacterium Hoeflea phototrophica type strain (DFL-43(T)).</title>
        <authorList>
            <person name="Fiebig A."/>
            <person name="Pradella S."/>
            <person name="Petersen J."/>
            <person name="Michael V."/>
            <person name="Paeuker O."/>
            <person name="Rohde M."/>
            <person name="Goeker M."/>
            <person name="Klenk H.P."/>
            <person name="Wagner-Doebler I."/>
        </authorList>
    </citation>
    <scope>NUCLEOTIDE SEQUENCE [LARGE SCALE GENOMIC DNA]</scope>
    <source>
        <strain evidence="9">DSM 17068 / NCIMB 14078 / DFL-43</strain>
    </source>
</reference>
<reference key="2">
    <citation type="journal article" date="2018" name="Sci. Rep.">
        <title>Coupling multi angle light scattering to ion exchange chromatography (IEX-MALS) for protein characterization.</title>
        <authorList>
            <person name="Amartely H."/>
            <person name="Avraham O."/>
            <person name="Friedler A."/>
            <person name="Livnah O."/>
            <person name="Lebendiker M."/>
        </authorList>
    </citation>
    <scope>SUBUNIT</scope>
    <source>
        <strain>DSM 17068 / NCIMB 14078 / DFL-43</strain>
    </source>
</reference>
<reference key="3">
    <citation type="journal article" date="2018" name="FEBS J.">
        <title>Crystal structure of afifavidin reveals common features of molecular assemblage in the bacterial dimeric avidins.</title>
        <authorList>
            <person name="Avraham O."/>
            <person name="Bayer E.A."/>
            <person name="Livnah O."/>
        </authorList>
    </citation>
    <scope>SUBUNIT</scope>
    <scope>DOMAIN</scope>
</reference>
<reference evidence="10 11 12 13 14 15" key="4">
    <citation type="journal article" date="2015" name="J. Struct. Biol.">
        <title>Hoefavidin: A dimeric bacterial avidin with a C-terminal binding tail.</title>
        <authorList>
            <person name="Avraham O."/>
            <person name="Meir A."/>
            <person name="Fish A."/>
            <person name="Bayer E.A."/>
            <person name="Livnah O."/>
        </authorList>
    </citation>
    <scope>X-RAY CRYSTALLOGRAPHY (1.17 ANGSTROMS) OF APOPROTEIN AND IN COMPLEXES WITH BIOTIN AND C-TERMINAL DERIVED PEPTIDES</scope>
    <scope>FUNCTION</scope>
    <scope>DISULFIDE BOND</scope>
    <scope>SUBUNIT</scope>
    <scope>BIOPHYSICOCHEMICAL PROPERTIES</scope>
    <scope>BIOTECHNOLOGY</scope>
    <source>
        <strain>DSM 17068 / NCIMB 14078 / DFL-43</strain>
    </source>
</reference>
<reference evidence="16" key="5">
    <citation type="journal article" date="2019" name="Crystals">
        <title>Generating a High Valency Biotin Binder by Selecting Uniform Protein Assemblies via Crystallization.</title>
        <authorList>
            <person name="Avraham O."/>
            <person name="Levi-Kalisman Y."/>
            <person name="Livnah O."/>
        </authorList>
    </citation>
    <scope>X-RAY CRYSTALLOGRAPHY (2.00 ANGSTROMS) OF 20-164 OF MUTANT CYS-83</scope>
    <scope>DISULFIDE BONDS</scope>
    <scope>MUTAGENESIS OF PRO-83</scope>
</reference>
<accession>A9D857</accession>
<proteinExistence type="evidence at protein level"/>
<protein>
    <recommendedName>
        <fullName evidence="6">Hoefavidin</fullName>
    </recommendedName>
</protein>
<evidence type="ECO:0000255" key="1"/>
<evidence type="ECO:0000255" key="2">
    <source>
        <dbReference type="PROSITE-ProRule" id="PRU00656"/>
    </source>
</evidence>
<evidence type="ECO:0000269" key="3">
    <source>
    </source>
</evidence>
<evidence type="ECO:0000269" key="4">
    <source>
    </source>
</evidence>
<evidence type="ECO:0000269" key="5">
    <source ref="5"/>
</evidence>
<evidence type="ECO:0000303" key="6">
    <source>
    </source>
</evidence>
<evidence type="ECO:0000305" key="7"/>
<evidence type="ECO:0000305" key="8">
    <source>
    </source>
</evidence>
<evidence type="ECO:0000312" key="9">
    <source>
        <dbReference type="EMBL" id="EDQ33228.1"/>
    </source>
</evidence>
<evidence type="ECO:0007744" key="10">
    <source>
        <dbReference type="PDB" id="4Z27"/>
    </source>
</evidence>
<evidence type="ECO:0007744" key="11">
    <source>
        <dbReference type="PDB" id="4Z28"/>
    </source>
</evidence>
<evidence type="ECO:0007744" key="12">
    <source>
        <dbReference type="PDB" id="4Z2O"/>
    </source>
</evidence>
<evidence type="ECO:0007744" key="13">
    <source>
        <dbReference type="PDB" id="4Z2P"/>
    </source>
</evidence>
<evidence type="ECO:0007744" key="14">
    <source>
        <dbReference type="PDB" id="4Z2V"/>
    </source>
</evidence>
<evidence type="ECO:0007744" key="15">
    <source>
        <dbReference type="PDB" id="4Z6J"/>
    </source>
</evidence>
<evidence type="ECO:0007744" key="16">
    <source>
        <dbReference type="PDB" id="6RTQ"/>
    </source>
</evidence>
<evidence type="ECO:0007829" key="17">
    <source>
        <dbReference type="PDB" id="4Z2O"/>
    </source>
</evidence>
<evidence type="ECO:0007829" key="18">
    <source>
        <dbReference type="PDB" id="4Z2V"/>
    </source>
</evidence>
<comment type="function">
    <text evidence="3">The exact role played by hoefavidin in the host organism is still obscure. Forms a strong non-covalent complex with biotin and 2-iminobiotin.</text>
</comment>
<comment type="biophysicochemical properties">
    <temperatureDependence>
        <text evidence="3">Is hyperthermostable. Displays a Tm value of 84.9 degrees Celsius, which increases to 96.2 degrees Celsius upon biotin binding.</text>
    </temperatureDependence>
</comment>
<comment type="subunit">
    <text evidence="3 4">Exhibits a dynamic oligomeric assembly: the apo form exits as homooctamers, which dissociate into homodimers upon biotin binding (PubMed:26126731, PubMed:30369031). The X-ray structure of the intact hoefavidin reveals unique crystal packing generated by an octameric cylindrical structure wherein the C-terminal segments of each monomer are introduced into the entrance of the biotin-binding site of an adjacent non-canonical monomer (PubMed:26126731).</text>
</comment>
<comment type="subcellular location">
    <subcellularLocation>
        <location evidence="7">Secreted</location>
    </subcellularLocation>
</comment>
<comment type="domain">
    <text evidence="4">The C-terminal segment plays a key role in the formation and stabilization of the octameric configuration, since the short afifavidin (lacking the last 5 amino acids) is only dimeric.</text>
</comment>
<comment type="biotechnology">
    <text evidence="8">The specific properties of hoefavidin make it an attractive target for novel biotechnological applications, including drug delivery, nanotechnology, and molecular labeling.</text>
</comment>
<comment type="similarity">
    <text evidence="7">Belongs to the avidin/streptavidin family.</text>
</comment>
<organism>
    <name type="scientific">Hoeflea phototrophica (strain DSM 17068 / NCIMB 14078 / DFL-43)</name>
    <dbReference type="NCBI Taxonomy" id="411684"/>
    <lineage>
        <taxon>Bacteria</taxon>
        <taxon>Pseudomonadati</taxon>
        <taxon>Pseudomonadota</taxon>
        <taxon>Alphaproteobacteria</taxon>
        <taxon>Hyphomicrobiales</taxon>
        <taxon>Rhizobiaceae</taxon>
        <taxon>Hoeflea</taxon>
    </lineage>
</organism>
<name>HOAVI_HOEPD</name>
<keyword id="KW-0002">3D-structure</keyword>
<keyword id="KW-0092">Biotin</keyword>
<keyword id="KW-1015">Disulfide bond</keyword>
<keyword id="KW-1185">Reference proteome</keyword>
<keyword id="KW-0964">Secreted</keyword>
<keyword id="KW-0732">Signal</keyword>
<sequence>MNKVLAIVLTITVAGFAQTAFADDHAMSPDMKLLAGASNWVNQSGSVAQFVFTPSPTQPQTYEVSGNYINNAQGTGCKGTPYPLSGAYYSGNQIISFSVVWSNASANCQSATGWTGYFDFSGSQAVLKTDWNLAFYSGSTPAIQQGQDDFMQSVATVSESLLTE</sequence>
<dbReference type="EMBL" id="ABIA03000004">
    <property type="protein sequence ID" value="EDQ33228.1"/>
    <property type="molecule type" value="Genomic_DNA"/>
</dbReference>
<dbReference type="RefSeq" id="WP_007199185.1">
    <property type="nucleotide sequence ID" value="NZ_CM002917.1"/>
</dbReference>
<dbReference type="PDB" id="4Z27">
    <property type="method" value="X-ray"/>
    <property type="resolution" value="1.34 A"/>
    <property type="chains" value="A/B=21-154"/>
</dbReference>
<dbReference type="PDB" id="4Z28">
    <property type="method" value="X-ray"/>
    <property type="resolution" value="1.66 A"/>
    <property type="chains" value="A/B=21-154"/>
</dbReference>
<dbReference type="PDB" id="4Z2O">
    <property type="method" value="X-ray"/>
    <property type="resolution" value="1.17 A"/>
    <property type="chains" value="A=21-154, P=153-164"/>
</dbReference>
<dbReference type="PDB" id="4Z2P">
    <property type="method" value="X-ray"/>
    <property type="resolution" value="1.60 A"/>
    <property type="chains" value="A/B=21-154, C/P=153-164"/>
</dbReference>
<dbReference type="PDB" id="4Z2V">
    <property type="method" value="X-ray"/>
    <property type="resolution" value="1.39 A"/>
    <property type="chains" value="A/B=21-154, C/P=153-164"/>
</dbReference>
<dbReference type="PDB" id="4Z6J">
    <property type="method" value="X-ray"/>
    <property type="resolution" value="2.40 A"/>
    <property type="chains" value="A/B=21-164"/>
</dbReference>
<dbReference type="PDB" id="6RTQ">
    <property type="method" value="X-ray"/>
    <property type="resolution" value="2.00 A"/>
    <property type="chains" value="A/B=20-164"/>
</dbReference>
<dbReference type="PDBsum" id="4Z27"/>
<dbReference type="PDBsum" id="4Z28"/>
<dbReference type="PDBsum" id="4Z2O"/>
<dbReference type="PDBsum" id="4Z2P"/>
<dbReference type="PDBsum" id="4Z2V"/>
<dbReference type="PDBsum" id="4Z6J"/>
<dbReference type="PDBsum" id="6RTQ"/>
<dbReference type="SMR" id="A9D857"/>
<dbReference type="eggNOG" id="ENOG502ZYDQ">
    <property type="taxonomic scope" value="Bacteria"/>
</dbReference>
<dbReference type="HOGENOM" id="CLU_1694061_0_0_5"/>
<dbReference type="OrthoDB" id="7376237at2"/>
<dbReference type="EvolutionaryTrace" id="A9D857"/>
<dbReference type="Proteomes" id="UP000004291">
    <property type="component" value="Chromosome"/>
</dbReference>
<dbReference type="GO" id="GO:0005576">
    <property type="term" value="C:extracellular region"/>
    <property type="evidence" value="ECO:0007669"/>
    <property type="project" value="UniProtKB-SubCell"/>
</dbReference>
<dbReference type="GO" id="GO:0009374">
    <property type="term" value="F:biotin binding"/>
    <property type="evidence" value="ECO:0000314"/>
    <property type="project" value="UniProtKB"/>
</dbReference>
<dbReference type="GO" id="GO:0042803">
    <property type="term" value="F:protein homodimerization activity"/>
    <property type="evidence" value="ECO:0000314"/>
    <property type="project" value="UniProtKB"/>
</dbReference>
<dbReference type="FunFam" id="2.40.128.30:FF:000002">
    <property type="entry name" value="Hoefavidin"/>
    <property type="match status" value="1"/>
</dbReference>
<dbReference type="Gene3D" id="2.40.128.30">
    <property type="entry name" value="Avidin-like"/>
    <property type="match status" value="1"/>
</dbReference>
<dbReference type="InterPro" id="IPR036896">
    <property type="entry name" value="Avidin-like_sf"/>
</dbReference>
<dbReference type="InterPro" id="IPR005468">
    <property type="entry name" value="Avidin/str"/>
</dbReference>
<dbReference type="Pfam" id="PF01382">
    <property type="entry name" value="Avidin"/>
    <property type="match status" value="1"/>
</dbReference>
<dbReference type="SUPFAM" id="SSF50876">
    <property type="entry name" value="Avidin/streptavidin"/>
    <property type="match status" value="1"/>
</dbReference>
<dbReference type="PROSITE" id="PS51326">
    <property type="entry name" value="AVIDIN_2"/>
    <property type="match status" value="1"/>
</dbReference>